<proteinExistence type="inferred from homology"/>
<accession>Q02N77</accession>
<protein>
    <recommendedName>
        <fullName evidence="1">UvrABC system protein C</fullName>
        <shortName evidence="1">Protein UvrC</shortName>
    </recommendedName>
    <alternativeName>
        <fullName evidence="1">Excinuclease ABC subunit C</fullName>
    </alternativeName>
</protein>
<comment type="function">
    <text evidence="1">The UvrABC repair system catalyzes the recognition and processing of DNA lesions. UvrC both incises the 5' and 3' sides of the lesion. The N-terminal half is responsible for the 3' incision and the C-terminal half is responsible for the 5' incision.</text>
</comment>
<comment type="subunit">
    <text evidence="1">Interacts with UvrB in an incision complex.</text>
</comment>
<comment type="subcellular location">
    <subcellularLocation>
        <location evidence="1">Cytoplasm</location>
    </subcellularLocation>
</comment>
<comment type="similarity">
    <text evidence="1">Belongs to the UvrC family.</text>
</comment>
<sequence length="608" mass="67338">MSAVFDASAFLATCSNRPGVYRMFDADAKLLYVGKAKSLKKRLASYFRKSGLAPKTAALVARIAQVETTITANETEALLLEQTLIKEWRPPYNILLRDDKSYPFVFLSSEDEYPRLSLHRGAKKRKGRYFGPYPSAGAIRESLNLLQKAFLVRQCEDSYFRNRTRPCLQYQIKRCKGPCVGLVSPEEYAEDVRHSVMFLEGRSNALADELNVGMEQAAMRLDFEKAAELRDQVAILRRVQDQQSMEGGNGDVDIVAAIVTPGGACVHLISVRGGRVLGSKNFFPQVAIEEEVGEVLLAFLGQYYLSHQERDLPAELIVNVTHEDFPVLVSAIAEARGRELEISYRVRGTRARWQQLAVTNAEQALGARLANRQHVAARFEALAEALDLAEPPQRLECFDISHSSGEATVASCVVFGPEGPLKSDYRRYNIEGVTAGDDYAAMHQALTRRFSRLKDGEGKMPDILLVDGGKGQLAMAQEVLQELAVAGLILLGVAKGVTRKPGLETLYLNDASHEFTLPADSPALHLIQQIRDEAHRFAITGHRARRGKARRTSTLEDVPGVGPKRRRDLLKHFGGLQELSRASIDELAKAPGISKKLAEQIYAVLHSE</sequence>
<evidence type="ECO:0000255" key="1">
    <source>
        <dbReference type="HAMAP-Rule" id="MF_00203"/>
    </source>
</evidence>
<reference key="1">
    <citation type="journal article" date="2006" name="Genome Biol.">
        <title>Genomic analysis reveals that Pseudomonas aeruginosa virulence is combinatorial.</title>
        <authorList>
            <person name="Lee D.G."/>
            <person name="Urbach J.M."/>
            <person name="Wu G."/>
            <person name="Liberati N.T."/>
            <person name="Feinbaum R.L."/>
            <person name="Miyata S."/>
            <person name="Diggins L.T."/>
            <person name="He J."/>
            <person name="Saucier M."/>
            <person name="Deziel E."/>
            <person name="Friedman L."/>
            <person name="Li L."/>
            <person name="Grills G."/>
            <person name="Montgomery K."/>
            <person name="Kucherlapati R."/>
            <person name="Rahme L.G."/>
            <person name="Ausubel F.M."/>
        </authorList>
    </citation>
    <scope>NUCLEOTIDE SEQUENCE [LARGE SCALE GENOMIC DNA]</scope>
    <source>
        <strain>UCBPP-PA14</strain>
    </source>
</reference>
<gene>
    <name evidence="1" type="primary">uvrC</name>
    <name type="ordered locus">PA14_30660</name>
</gene>
<organism>
    <name type="scientific">Pseudomonas aeruginosa (strain UCBPP-PA14)</name>
    <dbReference type="NCBI Taxonomy" id="208963"/>
    <lineage>
        <taxon>Bacteria</taxon>
        <taxon>Pseudomonadati</taxon>
        <taxon>Pseudomonadota</taxon>
        <taxon>Gammaproteobacteria</taxon>
        <taxon>Pseudomonadales</taxon>
        <taxon>Pseudomonadaceae</taxon>
        <taxon>Pseudomonas</taxon>
    </lineage>
</organism>
<name>UVRC_PSEAB</name>
<dbReference type="EMBL" id="CP000438">
    <property type="protein sequence ID" value="ABJ11808.1"/>
    <property type="molecule type" value="Genomic_DNA"/>
</dbReference>
<dbReference type="RefSeq" id="WP_003097551.1">
    <property type="nucleotide sequence ID" value="NZ_CP034244.1"/>
</dbReference>
<dbReference type="SMR" id="Q02N77"/>
<dbReference type="KEGG" id="pau:PA14_30660"/>
<dbReference type="PseudoCAP" id="PA14_30660"/>
<dbReference type="HOGENOM" id="CLU_014841_3_0_6"/>
<dbReference type="BioCyc" id="PAER208963:G1G74-2568-MONOMER"/>
<dbReference type="Proteomes" id="UP000000653">
    <property type="component" value="Chromosome"/>
</dbReference>
<dbReference type="GO" id="GO:0005737">
    <property type="term" value="C:cytoplasm"/>
    <property type="evidence" value="ECO:0007669"/>
    <property type="project" value="UniProtKB-SubCell"/>
</dbReference>
<dbReference type="GO" id="GO:0009380">
    <property type="term" value="C:excinuclease repair complex"/>
    <property type="evidence" value="ECO:0007669"/>
    <property type="project" value="InterPro"/>
</dbReference>
<dbReference type="GO" id="GO:0003677">
    <property type="term" value="F:DNA binding"/>
    <property type="evidence" value="ECO:0007669"/>
    <property type="project" value="UniProtKB-UniRule"/>
</dbReference>
<dbReference type="GO" id="GO:0009381">
    <property type="term" value="F:excinuclease ABC activity"/>
    <property type="evidence" value="ECO:0007669"/>
    <property type="project" value="UniProtKB-UniRule"/>
</dbReference>
<dbReference type="GO" id="GO:0006289">
    <property type="term" value="P:nucleotide-excision repair"/>
    <property type="evidence" value="ECO:0007669"/>
    <property type="project" value="UniProtKB-UniRule"/>
</dbReference>
<dbReference type="GO" id="GO:0009432">
    <property type="term" value="P:SOS response"/>
    <property type="evidence" value="ECO:0007669"/>
    <property type="project" value="UniProtKB-UniRule"/>
</dbReference>
<dbReference type="CDD" id="cd10434">
    <property type="entry name" value="GIY-YIG_UvrC_Cho"/>
    <property type="match status" value="1"/>
</dbReference>
<dbReference type="FunFam" id="1.10.150.20:FF:000005">
    <property type="entry name" value="UvrABC system protein C"/>
    <property type="match status" value="1"/>
</dbReference>
<dbReference type="FunFam" id="3.30.420.340:FF:000001">
    <property type="entry name" value="UvrABC system protein C"/>
    <property type="match status" value="1"/>
</dbReference>
<dbReference type="FunFam" id="3.40.1440.10:FF:000001">
    <property type="entry name" value="UvrABC system protein C"/>
    <property type="match status" value="1"/>
</dbReference>
<dbReference type="Gene3D" id="1.10.150.20">
    <property type="entry name" value="5' to 3' exonuclease, C-terminal subdomain"/>
    <property type="match status" value="1"/>
</dbReference>
<dbReference type="Gene3D" id="3.40.1440.10">
    <property type="entry name" value="GIY-YIG endonuclease"/>
    <property type="match status" value="1"/>
</dbReference>
<dbReference type="Gene3D" id="4.10.860.10">
    <property type="entry name" value="UVR domain"/>
    <property type="match status" value="1"/>
</dbReference>
<dbReference type="Gene3D" id="3.30.420.340">
    <property type="entry name" value="UvrC, RNAse H endonuclease domain"/>
    <property type="match status" value="1"/>
</dbReference>
<dbReference type="HAMAP" id="MF_00203">
    <property type="entry name" value="UvrC"/>
    <property type="match status" value="1"/>
</dbReference>
<dbReference type="InterPro" id="IPR000305">
    <property type="entry name" value="GIY-YIG_endonuc"/>
</dbReference>
<dbReference type="InterPro" id="IPR035901">
    <property type="entry name" value="GIY-YIG_endonuc_sf"/>
</dbReference>
<dbReference type="InterPro" id="IPR047296">
    <property type="entry name" value="GIY-YIG_UvrC_Cho"/>
</dbReference>
<dbReference type="InterPro" id="IPR003583">
    <property type="entry name" value="Hlx-hairpin-Hlx_DNA-bd_motif"/>
</dbReference>
<dbReference type="InterPro" id="IPR010994">
    <property type="entry name" value="RuvA_2-like"/>
</dbReference>
<dbReference type="InterPro" id="IPR001943">
    <property type="entry name" value="UVR_dom"/>
</dbReference>
<dbReference type="InterPro" id="IPR036876">
    <property type="entry name" value="UVR_dom_sf"/>
</dbReference>
<dbReference type="InterPro" id="IPR050066">
    <property type="entry name" value="UvrABC_protein_C"/>
</dbReference>
<dbReference type="InterPro" id="IPR004791">
    <property type="entry name" value="UvrC"/>
</dbReference>
<dbReference type="InterPro" id="IPR001162">
    <property type="entry name" value="UvrC_RNase_H_dom"/>
</dbReference>
<dbReference type="InterPro" id="IPR038476">
    <property type="entry name" value="UvrC_RNase_H_dom_sf"/>
</dbReference>
<dbReference type="NCBIfam" id="NF001824">
    <property type="entry name" value="PRK00558.1-5"/>
    <property type="match status" value="1"/>
</dbReference>
<dbReference type="NCBIfam" id="TIGR00194">
    <property type="entry name" value="uvrC"/>
    <property type="match status" value="1"/>
</dbReference>
<dbReference type="PANTHER" id="PTHR30562:SF1">
    <property type="entry name" value="UVRABC SYSTEM PROTEIN C"/>
    <property type="match status" value="1"/>
</dbReference>
<dbReference type="PANTHER" id="PTHR30562">
    <property type="entry name" value="UVRC/OXIDOREDUCTASE"/>
    <property type="match status" value="1"/>
</dbReference>
<dbReference type="Pfam" id="PF01541">
    <property type="entry name" value="GIY-YIG"/>
    <property type="match status" value="1"/>
</dbReference>
<dbReference type="Pfam" id="PF14520">
    <property type="entry name" value="HHH_5"/>
    <property type="match status" value="1"/>
</dbReference>
<dbReference type="Pfam" id="PF02151">
    <property type="entry name" value="UVR"/>
    <property type="match status" value="1"/>
</dbReference>
<dbReference type="Pfam" id="PF22920">
    <property type="entry name" value="UvrC_RNaseH"/>
    <property type="match status" value="1"/>
</dbReference>
<dbReference type="Pfam" id="PF08459">
    <property type="entry name" value="UvrC_RNaseH_dom"/>
    <property type="match status" value="1"/>
</dbReference>
<dbReference type="SMART" id="SM00465">
    <property type="entry name" value="GIYc"/>
    <property type="match status" value="1"/>
</dbReference>
<dbReference type="SMART" id="SM00278">
    <property type="entry name" value="HhH1"/>
    <property type="match status" value="2"/>
</dbReference>
<dbReference type="SUPFAM" id="SSF46600">
    <property type="entry name" value="C-terminal UvrC-binding domain of UvrB"/>
    <property type="match status" value="1"/>
</dbReference>
<dbReference type="SUPFAM" id="SSF82771">
    <property type="entry name" value="GIY-YIG endonuclease"/>
    <property type="match status" value="1"/>
</dbReference>
<dbReference type="SUPFAM" id="SSF47781">
    <property type="entry name" value="RuvA domain 2-like"/>
    <property type="match status" value="1"/>
</dbReference>
<dbReference type="PROSITE" id="PS50164">
    <property type="entry name" value="GIY_YIG"/>
    <property type="match status" value="1"/>
</dbReference>
<dbReference type="PROSITE" id="PS50151">
    <property type="entry name" value="UVR"/>
    <property type="match status" value="1"/>
</dbReference>
<dbReference type="PROSITE" id="PS50165">
    <property type="entry name" value="UVRC"/>
    <property type="match status" value="1"/>
</dbReference>
<keyword id="KW-0963">Cytoplasm</keyword>
<keyword id="KW-0227">DNA damage</keyword>
<keyword id="KW-0228">DNA excision</keyword>
<keyword id="KW-0234">DNA repair</keyword>
<keyword id="KW-0267">Excision nuclease</keyword>
<keyword id="KW-0742">SOS response</keyword>
<feature type="chain" id="PRO_1000077819" description="UvrABC system protein C">
    <location>
        <begin position="1"/>
        <end position="608"/>
    </location>
</feature>
<feature type="domain" description="GIY-YIG" evidence="1">
    <location>
        <begin position="16"/>
        <end position="94"/>
    </location>
</feature>
<feature type="domain" description="UVR" evidence="1">
    <location>
        <begin position="204"/>
        <end position="239"/>
    </location>
</feature>